<gene>
    <name evidence="1" type="primary">argB</name>
    <name type="ordered locus">DehaBAV1_1068</name>
</gene>
<comment type="function">
    <text evidence="1">Catalyzes the ATP-dependent phosphorylation of N-acetyl-L-glutamate.</text>
</comment>
<comment type="catalytic activity">
    <reaction evidence="1">
        <text>N-acetyl-L-glutamate + ATP = N-acetyl-L-glutamyl 5-phosphate + ADP</text>
        <dbReference type="Rhea" id="RHEA:14629"/>
        <dbReference type="ChEBI" id="CHEBI:30616"/>
        <dbReference type="ChEBI" id="CHEBI:44337"/>
        <dbReference type="ChEBI" id="CHEBI:57936"/>
        <dbReference type="ChEBI" id="CHEBI:456216"/>
        <dbReference type="EC" id="2.7.2.8"/>
    </reaction>
</comment>
<comment type="pathway">
    <text evidence="1">Amino-acid biosynthesis; L-arginine biosynthesis; N(2)-acetyl-L-ornithine from L-glutamate: step 2/4.</text>
</comment>
<comment type="subcellular location">
    <subcellularLocation>
        <location evidence="1">Cytoplasm</location>
    </subcellularLocation>
</comment>
<comment type="similarity">
    <text evidence="1">Belongs to the acetylglutamate kinase family. ArgB subfamily.</text>
</comment>
<proteinExistence type="inferred from homology"/>
<feature type="chain" id="PRO_0000335625" description="Acetylglutamate kinase">
    <location>
        <begin position="1"/>
        <end position="272"/>
    </location>
</feature>
<feature type="binding site" evidence="1">
    <location>
        <begin position="46"/>
        <end position="47"/>
    </location>
    <ligand>
        <name>substrate</name>
    </ligand>
</feature>
<feature type="binding site" evidence="1">
    <location>
        <position position="68"/>
    </location>
    <ligand>
        <name>substrate</name>
    </ligand>
</feature>
<feature type="binding site" evidence="1">
    <location>
        <position position="166"/>
    </location>
    <ligand>
        <name>substrate</name>
    </ligand>
</feature>
<feature type="site" description="Transition state stabilizer" evidence="1">
    <location>
        <position position="14"/>
    </location>
</feature>
<feature type="site" description="Transition state stabilizer" evidence="1">
    <location>
        <position position="226"/>
    </location>
</feature>
<sequence>MEMTQSSNHIVVIKLGGSVLDSKDTSLKDIATLKQLGLKPVLIHGGASTVSAWSAKLGLETRLVNGERVTDDATLDVVAAILAGLVNKEIVAALLDMGIKAAGISGVDSATITGQIRATETGYLGDVVQVNTELITALLDANITPVISPVSFHQTNRPSGSRRLLNINGDPVAGEIASALQAERLVFLTDVPAVKGKNGEALGEISADHAAELLASGTASGGMIPKLRSCLKATLAGSSACIIDGRKPHMLIRELTEGNCGTTVTGQHLRRS</sequence>
<protein>
    <recommendedName>
        <fullName evidence="1">Acetylglutamate kinase</fullName>
        <ecNumber evidence="1">2.7.2.8</ecNumber>
    </recommendedName>
    <alternativeName>
        <fullName evidence="1">N-acetyl-L-glutamate 5-phosphotransferase</fullName>
    </alternativeName>
    <alternativeName>
        <fullName evidence="1">NAG kinase</fullName>
        <shortName evidence="1">NAGK</shortName>
    </alternativeName>
</protein>
<keyword id="KW-0028">Amino-acid biosynthesis</keyword>
<keyword id="KW-0055">Arginine biosynthesis</keyword>
<keyword id="KW-0067">ATP-binding</keyword>
<keyword id="KW-0963">Cytoplasm</keyword>
<keyword id="KW-0418">Kinase</keyword>
<keyword id="KW-0547">Nucleotide-binding</keyword>
<keyword id="KW-0808">Transferase</keyword>
<evidence type="ECO:0000255" key="1">
    <source>
        <dbReference type="HAMAP-Rule" id="MF_00082"/>
    </source>
</evidence>
<accession>A5FQ84</accession>
<dbReference type="EC" id="2.7.2.8" evidence="1"/>
<dbReference type="EMBL" id="CP000688">
    <property type="protein sequence ID" value="ABQ17648.1"/>
    <property type="molecule type" value="Genomic_DNA"/>
</dbReference>
<dbReference type="SMR" id="A5FQ84"/>
<dbReference type="KEGG" id="deb:DehaBAV1_1068"/>
<dbReference type="PATRIC" id="fig|216389.18.peg.1130"/>
<dbReference type="HOGENOM" id="CLU_053680_1_0_0"/>
<dbReference type="UniPathway" id="UPA00068">
    <property type="reaction ID" value="UER00107"/>
</dbReference>
<dbReference type="GO" id="GO:0005737">
    <property type="term" value="C:cytoplasm"/>
    <property type="evidence" value="ECO:0007669"/>
    <property type="project" value="UniProtKB-SubCell"/>
</dbReference>
<dbReference type="GO" id="GO:0003991">
    <property type="term" value="F:acetylglutamate kinase activity"/>
    <property type="evidence" value="ECO:0007669"/>
    <property type="project" value="UniProtKB-UniRule"/>
</dbReference>
<dbReference type="GO" id="GO:0005524">
    <property type="term" value="F:ATP binding"/>
    <property type="evidence" value="ECO:0007669"/>
    <property type="project" value="UniProtKB-UniRule"/>
</dbReference>
<dbReference type="GO" id="GO:0042450">
    <property type="term" value="P:arginine biosynthetic process via ornithine"/>
    <property type="evidence" value="ECO:0007669"/>
    <property type="project" value="UniProtKB-UniRule"/>
</dbReference>
<dbReference type="GO" id="GO:0006526">
    <property type="term" value="P:L-arginine biosynthetic process"/>
    <property type="evidence" value="ECO:0007669"/>
    <property type="project" value="UniProtKB-UniPathway"/>
</dbReference>
<dbReference type="CDD" id="cd04238">
    <property type="entry name" value="AAK_NAGK-like"/>
    <property type="match status" value="1"/>
</dbReference>
<dbReference type="Gene3D" id="3.40.1160.10">
    <property type="entry name" value="Acetylglutamate kinase-like"/>
    <property type="match status" value="1"/>
</dbReference>
<dbReference type="HAMAP" id="MF_00082">
    <property type="entry name" value="ArgB"/>
    <property type="match status" value="1"/>
</dbReference>
<dbReference type="InterPro" id="IPR036393">
    <property type="entry name" value="AceGlu_kinase-like_sf"/>
</dbReference>
<dbReference type="InterPro" id="IPR004662">
    <property type="entry name" value="AcgluKinase_fam"/>
</dbReference>
<dbReference type="InterPro" id="IPR037528">
    <property type="entry name" value="ArgB"/>
</dbReference>
<dbReference type="InterPro" id="IPR001048">
    <property type="entry name" value="Asp/Glu/Uridylate_kinase"/>
</dbReference>
<dbReference type="InterPro" id="IPR001057">
    <property type="entry name" value="Glu/AcGlu_kinase"/>
</dbReference>
<dbReference type="NCBIfam" id="TIGR00761">
    <property type="entry name" value="argB"/>
    <property type="match status" value="1"/>
</dbReference>
<dbReference type="PANTHER" id="PTHR23342">
    <property type="entry name" value="N-ACETYLGLUTAMATE SYNTHASE"/>
    <property type="match status" value="1"/>
</dbReference>
<dbReference type="PANTHER" id="PTHR23342:SF0">
    <property type="entry name" value="N-ACETYLGLUTAMATE SYNTHASE, MITOCHONDRIAL"/>
    <property type="match status" value="1"/>
</dbReference>
<dbReference type="Pfam" id="PF00696">
    <property type="entry name" value="AA_kinase"/>
    <property type="match status" value="1"/>
</dbReference>
<dbReference type="PIRSF" id="PIRSF000728">
    <property type="entry name" value="NAGK"/>
    <property type="match status" value="1"/>
</dbReference>
<dbReference type="PRINTS" id="PR00474">
    <property type="entry name" value="GLU5KINASE"/>
</dbReference>
<dbReference type="SUPFAM" id="SSF53633">
    <property type="entry name" value="Carbamate kinase-like"/>
    <property type="match status" value="1"/>
</dbReference>
<reference key="1">
    <citation type="submission" date="2007-05" db="EMBL/GenBank/DDBJ databases">
        <title>Complete sequence of Dehalococcoides sp. BAV1.</title>
        <authorList>
            <consortium name="US DOE Joint Genome Institute"/>
            <person name="Copeland A."/>
            <person name="Lucas S."/>
            <person name="Lapidus A."/>
            <person name="Barry K."/>
            <person name="Detter J.C."/>
            <person name="Glavina del Rio T."/>
            <person name="Hammon N."/>
            <person name="Israni S."/>
            <person name="Pitluck S."/>
            <person name="Lowry S."/>
            <person name="Clum A."/>
            <person name="Schmutz J."/>
            <person name="Larimer F."/>
            <person name="Land M."/>
            <person name="Hauser L."/>
            <person name="Kyrpides N."/>
            <person name="Kim E."/>
            <person name="Ritalahti K.M."/>
            <person name="Loeffler F."/>
            <person name="Richardson P."/>
        </authorList>
    </citation>
    <scope>NUCLEOTIDE SEQUENCE [LARGE SCALE GENOMIC DNA]</scope>
    <source>
        <strain>ATCC BAA-2100 / JCM 16839 / KCTC 5957 / BAV1</strain>
    </source>
</reference>
<name>ARGB_DEHMB</name>
<organism>
    <name type="scientific">Dehalococcoides mccartyi (strain ATCC BAA-2100 / JCM 16839 / KCTC 5957 / BAV1)</name>
    <dbReference type="NCBI Taxonomy" id="216389"/>
    <lineage>
        <taxon>Bacteria</taxon>
        <taxon>Bacillati</taxon>
        <taxon>Chloroflexota</taxon>
        <taxon>Dehalococcoidia</taxon>
        <taxon>Dehalococcoidales</taxon>
        <taxon>Dehalococcoidaceae</taxon>
        <taxon>Dehalococcoides</taxon>
    </lineage>
</organism>